<feature type="chain" id="PRO_0000373344" description="Protein MGF 505-9R">
    <location>
        <begin position="1"/>
        <end position="506"/>
    </location>
</feature>
<organismHost>
    <name type="scientific">Ornithodoros</name>
    <name type="common">relapsing fever ticks</name>
    <dbReference type="NCBI Taxonomy" id="6937"/>
</organismHost>
<organismHost>
    <name type="scientific">Sus scrofa</name>
    <name type="common">Pig</name>
    <dbReference type="NCBI Taxonomy" id="9823"/>
</organismHost>
<sequence>MFSLQDLCRKNLFLPLEPLGKHVVQRLGLYWEGHGSLKRVGDCFICVDKIWILSIHKAIQIAASEGNENIVKLFLLWKGSLQYAIIGALEGRQYDLIQKYYNQIGDCHENLPLIQDPEIYERCHELNVTCTFQCLFQHAIRDNMLPIFQKYGEDLNGNRRMVQLLYEMACRLQNYDIIKWIGFNLHVYNLEAIFSIAFVRKDLTLYSLGYMLLLGRMSTEDRNFISIITRHLEYASKKGLFDFVLESLKYGGQVDTVLFQAVKYNHRKILAHFIHEIPRETVEKLILHAVESRASRKTFNLLLSSINYCVNPFVKKLLHTVVKHKYMLIIKLLLERPKKKINLVDAALFKLVKYSTYAEIVKFMKEFSVDPERVVKMAARLMRVDLIKKISNDAWENKLERIKHLKQMVNTMNHRNGKNLLMYNIHNITGYTCLNTKEAFNLTRFYAVHNATCLFKEMCKSCFVHDKIQFRELLEDCLHIANRHDYIQIAETADECIKYIDLITPK</sequence>
<gene>
    <name type="ordered locus">BA71R-030</name>
    <name type="ORF">A506R</name>
</gene>
<protein>
    <recommendedName>
        <fullName>Protein MGF 505-9R</fullName>
    </recommendedName>
</protein>
<evidence type="ECO:0000269" key="1">
    <source>
    </source>
</evidence>
<evidence type="ECO:0000269" key="2">
    <source>
    </source>
</evidence>
<evidence type="ECO:0000305" key="3"/>
<reference key="1">
    <citation type="journal article" date="1995" name="Virology">
        <title>Analysis of the complete nucleotide sequence of African swine fever virus.</title>
        <authorList>
            <person name="Yanez R.J."/>
            <person name="Rodriguez J.M."/>
            <person name="Nogal M.L."/>
            <person name="Yuste L."/>
            <person name="Enriquez C."/>
            <person name="Rodriguez J.F."/>
            <person name="Vinuela E."/>
        </authorList>
    </citation>
    <scope>NUCLEOTIDE SEQUENCE [LARGE SCALE GENOMIC DNA]</scope>
</reference>
<reference key="2">
    <citation type="journal article" date="2001" name="J. Virol.">
        <title>African swine fever virus multigene family 360 and 530 genes are novel macrophage host range determinants.</title>
        <authorList>
            <person name="Zsak L."/>
            <person name="Lu Z."/>
            <person name="Burrage T.G."/>
            <person name="Neilan J.G."/>
            <person name="Kutish G.F."/>
            <person name="Moore D.M."/>
            <person name="Rock D.L."/>
        </authorList>
    </citation>
    <scope>FUNCTION</scope>
</reference>
<reference key="3">
    <citation type="journal article" date="2020" name="J. Virol.">
        <title>The African Swine Fever Virus Transcriptome.</title>
        <authorList>
            <person name="Cackett G."/>
            <person name="Matelska D."/>
            <person name="Sykora M."/>
            <person name="Portugal R."/>
            <person name="Malecki M."/>
            <person name="Baehler J."/>
            <person name="Dixon L."/>
            <person name="Werner F."/>
        </authorList>
    </citation>
    <scope>INDUCTION</scope>
</reference>
<name>5059R_ASFB7</name>
<proteinExistence type="evidence at transcript level"/>
<comment type="function">
    <text evidence="1">Plays a role in virus cell tropism, and may be required for efficient virus replication in macrophages.</text>
</comment>
<comment type="induction">
    <text evidence="2">Expressed in the early phase of the viral replicative cycle.</text>
</comment>
<comment type="similarity">
    <text evidence="3">Belongs to the asfivirus MGF 505 family.</text>
</comment>
<organism>
    <name type="scientific">African swine fever virus (strain Badajoz 1971 Vero-adapted)</name>
    <name type="common">Ba71V</name>
    <name type="synonym">ASFV</name>
    <dbReference type="NCBI Taxonomy" id="10498"/>
    <lineage>
        <taxon>Viruses</taxon>
        <taxon>Varidnaviria</taxon>
        <taxon>Bamfordvirae</taxon>
        <taxon>Nucleocytoviricota</taxon>
        <taxon>Pokkesviricetes</taxon>
        <taxon>Asfuvirales</taxon>
        <taxon>Asfarviridae</taxon>
        <taxon>Asfivirus</taxon>
        <taxon>African swine fever virus</taxon>
    </lineage>
</organism>
<dbReference type="EMBL" id="U02468">
    <property type="protein sequence ID" value="AAA17790.1"/>
    <property type="molecule type" value="Genomic_DNA"/>
</dbReference>
<dbReference type="EMBL" id="U18466">
    <property type="protein sequence ID" value="AAA65261.1"/>
    <property type="molecule type" value="Genomic_DNA"/>
</dbReference>
<dbReference type="RefSeq" id="NP_042725.1">
    <property type="nucleotide sequence ID" value="NC_001659.2"/>
</dbReference>
<dbReference type="SMR" id="Q89740"/>
<dbReference type="GeneID" id="22220413"/>
<dbReference type="KEGG" id="vg:22220413"/>
<dbReference type="Proteomes" id="UP000000624">
    <property type="component" value="Segment"/>
</dbReference>
<dbReference type="InterPro" id="IPR004858">
    <property type="entry name" value="MGF_505"/>
</dbReference>
<dbReference type="Pfam" id="PF03158">
    <property type="entry name" value="DUF249"/>
    <property type="match status" value="1"/>
</dbReference>
<accession>Q89740</accession>
<keyword id="KW-0244">Early protein</keyword>
<keyword id="KW-1185">Reference proteome</keyword>